<protein>
    <recommendedName>
        <fullName>Conotoxin Lv15a</fullName>
    </recommendedName>
</protein>
<keyword id="KW-1015">Disulfide bond</keyword>
<keyword id="KW-0873">Pyrrolidone carboxylic acid</keyword>
<keyword id="KW-0964">Secreted</keyword>
<keyword id="KW-0732">Signal</keyword>
<keyword id="KW-0800">Toxin</keyword>
<dbReference type="EMBL" id="GQ414739">
    <property type="protein sequence ID" value="ACV07669.1"/>
    <property type="molecule type" value="mRNA"/>
</dbReference>
<dbReference type="ConoServer" id="3868">
    <property type="toxin name" value="Lv15a precursor"/>
</dbReference>
<dbReference type="GO" id="GO:0005576">
    <property type="term" value="C:extracellular region"/>
    <property type="evidence" value="ECO:0007669"/>
    <property type="project" value="UniProtKB-SubCell"/>
</dbReference>
<dbReference type="GO" id="GO:0008200">
    <property type="term" value="F:ion channel inhibitor activity"/>
    <property type="evidence" value="ECO:0007669"/>
    <property type="project" value="InterPro"/>
</dbReference>
<dbReference type="GO" id="GO:0090729">
    <property type="term" value="F:toxin activity"/>
    <property type="evidence" value="ECO:0007669"/>
    <property type="project" value="UniProtKB-KW"/>
</dbReference>
<dbReference type="InterPro" id="IPR004214">
    <property type="entry name" value="Conotoxin"/>
</dbReference>
<dbReference type="Pfam" id="PF02950">
    <property type="entry name" value="Conotoxin"/>
    <property type="match status" value="1"/>
</dbReference>
<sequence length="85" mass="9620">MEKLTVLILVATVLLMIQVLAQSGGDKHLKRRPKQYATKRLSALMRGHRQCTPQNVQCEEDDECCSNLECKCSTVPDCNFPKCRP</sequence>
<evidence type="ECO:0000250" key="1"/>
<evidence type="ECO:0000255" key="2"/>
<evidence type="ECO:0000305" key="3"/>
<reference key="1">
    <citation type="submission" date="2009-07" db="EMBL/GenBank/DDBJ databases">
        <title>A novel class of conotoxin cDNAs with a distinctive cysteine arrangement.</title>
        <authorList>
            <person name="Wang L."/>
            <person name="Jiang X."/>
            <person name="Wu Y."/>
            <person name="Zhou M."/>
            <person name="Xu A."/>
        </authorList>
    </citation>
    <scope>NUCLEOTIDE SEQUENCE [MRNA]</scope>
    <source>
        <tissue>Venom duct</tissue>
    </source>
</reference>
<accession>C8CK76</accession>
<proteinExistence type="evidence at transcript level"/>
<organism>
    <name type="scientific">Conus lividus</name>
    <name type="common">Livid cone</name>
    <dbReference type="NCBI Taxonomy" id="89426"/>
    <lineage>
        <taxon>Eukaryota</taxon>
        <taxon>Metazoa</taxon>
        <taxon>Spiralia</taxon>
        <taxon>Lophotrochozoa</taxon>
        <taxon>Mollusca</taxon>
        <taxon>Gastropoda</taxon>
        <taxon>Caenogastropoda</taxon>
        <taxon>Neogastropoda</taxon>
        <taxon>Conoidea</taxon>
        <taxon>Conidae</taxon>
        <taxon>Conus</taxon>
        <taxon>Lividoconus</taxon>
    </lineage>
</organism>
<comment type="subcellular location">
    <subcellularLocation>
        <location evidence="1">Secreted</location>
    </subcellularLocation>
</comment>
<comment type="tissue specificity">
    <text>Expressed by the venom duct.</text>
</comment>
<comment type="domain">
    <text>The cysteine framework is XV (C-C-CC-C-C-C-C).</text>
</comment>
<comment type="PTM">
    <text evidence="1">Contains 4 disulfide bonds.</text>
</comment>
<comment type="similarity">
    <text evidence="3">Belongs to the conotoxin O2 superfamily.</text>
</comment>
<name>CO2FA_CONLI</name>
<feature type="signal peptide" evidence="2">
    <location>
        <begin position="1"/>
        <end position="23"/>
    </location>
</feature>
<feature type="propeptide" id="PRO_0000392188" evidence="1">
    <location>
        <begin position="24"/>
        <end position="49"/>
    </location>
</feature>
<feature type="peptide" id="PRO_0000392189" description="Conotoxin Lv15a">
    <location>
        <begin position="50"/>
        <end position="85"/>
    </location>
</feature>
<feature type="modified residue" description="Pyrrolidone carboxylic acid" evidence="1">
    <location>
        <position position="50"/>
    </location>
</feature>